<dbReference type="EC" id="7.4.2.8" evidence="1"/>
<dbReference type="EMBL" id="AM920689">
    <property type="protein sequence ID" value="CAP52987.1"/>
    <property type="molecule type" value="Genomic_DNA"/>
</dbReference>
<dbReference type="SMR" id="B0RV96"/>
<dbReference type="KEGG" id="xca:xcc-b100_3622"/>
<dbReference type="HOGENOM" id="CLU_005314_3_0_6"/>
<dbReference type="Proteomes" id="UP000001188">
    <property type="component" value="Chromosome"/>
</dbReference>
<dbReference type="GO" id="GO:0031522">
    <property type="term" value="C:cell envelope Sec protein transport complex"/>
    <property type="evidence" value="ECO:0007669"/>
    <property type="project" value="TreeGrafter"/>
</dbReference>
<dbReference type="GO" id="GO:0005829">
    <property type="term" value="C:cytosol"/>
    <property type="evidence" value="ECO:0007669"/>
    <property type="project" value="TreeGrafter"/>
</dbReference>
<dbReference type="GO" id="GO:0005886">
    <property type="term" value="C:plasma membrane"/>
    <property type="evidence" value="ECO:0007669"/>
    <property type="project" value="UniProtKB-SubCell"/>
</dbReference>
<dbReference type="GO" id="GO:0005524">
    <property type="term" value="F:ATP binding"/>
    <property type="evidence" value="ECO:0007669"/>
    <property type="project" value="UniProtKB-UniRule"/>
</dbReference>
<dbReference type="GO" id="GO:0046872">
    <property type="term" value="F:metal ion binding"/>
    <property type="evidence" value="ECO:0007669"/>
    <property type="project" value="UniProtKB-KW"/>
</dbReference>
<dbReference type="GO" id="GO:0008564">
    <property type="term" value="F:protein-exporting ATPase activity"/>
    <property type="evidence" value="ECO:0007669"/>
    <property type="project" value="UniProtKB-EC"/>
</dbReference>
<dbReference type="GO" id="GO:0065002">
    <property type="term" value="P:intracellular protein transmembrane transport"/>
    <property type="evidence" value="ECO:0007669"/>
    <property type="project" value="UniProtKB-UniRule"/>
</dbReference>
<dbReference type="GO" id="GO:0017038">
    <property type="term" value="P:protein import"/>
    <property type="evidence" value="ECO:0007669"/>
    <property type="project" value="InterPro"/>
</dbReference>
<dbReference type="GO" id="GO:0006605">
    <property type="term" value="P:protein targeting"/>
    <property type="evidence" value="ECO:0007669"/>
    <property type="project" value="UniProtKB-UniRule"/>
</dbReference>
<dbReference type="GO" id="GO:0043952">
    <property type="term" value="P:protein transport by the Sec complex"/>
    <property type="evidence" value="ECO:0007669"/>
    <property type="project" value="TreeGrafter"/>
</dbReference>
<dbReference type="CDD" id="cd17928">
    <property type="entry name" value="DEXDc_SecA"/>
    <property type="match status" value="1"/>
</dbReference>
<dbReference type="CDD" id="cd18803">
    <property type="entry name" value="SF2_C_secA"/>
    <property type="match status" value="1"/>
</dbReference>
<dbReference type="FunFam" id="3.40.50.300:FF:000081">
    <property type="entry name" value="Preprotein translocase subunit SecA"/>
    <property type="match status" value="1"/>
</dbReference>
<dbReference type="FunFam" id="3.40.50.300:FF:000113">
    <property type="entry name" value="Preprotein translocase subunit SecA"/>
    <property type="match status" value="1"/>
</dbReference>
<dbReference type="FunFam" id="3.90.1440.10:FF:000001">
    <property type="entry name" value="Preprotein translocase subunit SecA"/>
    <property type="match status" value="1"/>
</dbReference>
<dbReference type="FunFam" id="1.10.3060.10:FF:000003">
    <property type="entry name" value="Protein translocase subunit SecA"/>
    <property type="match status" value="1"/>
</dbReference>
<dbReference type="Gene3D" id="1.10.3060.10">
    <property type="entry name" value="Helical scaffold and wing domains of SecA"/>
    <property type="match status" value="1"/>
</dbReference>
<dbReference type="Gene3D" id="3.40.50.300">
    <property type="entry name" value="P-loop containing nucleotide triphosphate hydrolases"/>
    <property type="match status" value="2"/>
</dbReference>
<dbReference type="Gene3D" id="3.90.1440.10">
    <property type="entry name" value="SecA, preprotein cross-linking domain"/>
    <property type="match status" value="1"/>
</dbReference>
<dbReference type="HAMAP" id="MF_01382">
    <property type="entry name" value="SecA"/>
    <property type="match status" value="1"/>
</dbReference>
<dbReference type="InterPro" id="IPR014001">
    <property type="entry name" value="Helicase_ATP-bd"/>
</dbReference>
<dbReference type="InterPro" id="IPR001650">
    <property type="entry name" value="Helicase_C-like"/>
</dbReference>
<dbReference type="InterPro" id="IPR027417">
    <property type="entry name" value="P-loop_NTPase"/>
</dbReference>
<dbReference type="InterPro" id="IPR004027">
    <property type="entry name" value="SEC_C_motif"/>
</dbReference>
<dbReference type="InterPro" id="IPR000185">
    <property type="entry name" value="SecA"/>
</dbReference>
<dbReference type="InterPro" id="IPR020937">
    <property type="entry name" value="SecA_CS"/>
</dbReference>
<dbReference type="InterPro" id="IPR011115">
    <property type="entry name" value="SecA_DEAD"/>
</dbReference>
<dbReference type="InterPro" id="IPR014018">
    <property type="entry name" value="SecA_motor_DEAD"/>
</dbReference>
<dbReference type="InterPro" id="IPR011130">
    <property type="entry name" value="SecA_preprotein_X-link_dom"/>
</dbReference>
<dbReference type="InterPro" id="IPR044722">
    <property type="entry name" value="SecA_SF2_C"/>
</dbReference>
<dbReference type="InterPro" id="IPR011116">
    <property type="entry name" value="SecA_Wing/Scaffold"/>
</dbReference>
<dbReference type="InterPro" id="IPR036266">
    <property type="entry name" value="SecA_Wing/Scaffold_sf"/>
</dbReference>
<dbReference type="InterPro" id="IPR036670">
    <property type="entry name" value="SecA_X-link_sf"/>
</dbReference>
<dbReference type="NCBIfam" id="NF009538">
    <property type="entry name" value="PRK12904.1"/>
    <property type="match status" value="1"/>
</dbReference>
<dbReference type="NCBIfam" id="TIGR00963">
    <property type="entry name" value="secA"/>
    <property type="match status" value="1"/>
</dbReference>
<dbReference type="PANTHER" id="PTHR30612:SF0">
    <property type="entry name" value="CHLOROPLAST PROTEIN-TRANSPORTING ATPASE"/>
    <property type="match status" value="1"/>
</dbReference>
<dbReference type="PANTHER" id="PTHR30612">
    <property type="entry name" value="SECA INNER MEMBRANE COMPONENT OF SEC PROTEIN SECRETION SYSTEM"/>
    <property type="match status" value="1"/>
</dbReference>
<dbReference type="Pfam" id="PF21090">
    <property type="entry name" value="P-loop_SecA"/>
    <property type="match status" value="1"/>
</dbReference>
<dbReference type="Pfam" id="PF02810">
    <property type="entry name" value="SEC-C"/>
    <property type="match status" value="1"/>
</dbReference>
<dbReference type="Pfam" id="PF07517">
    <property type="entry name" value="SecA_DEAD"/>
    <property type="match status" value="1"/>
</dbReference>
<dbReference type="Pfam" id="PF01043">
    <property type="entry name" value="SecA_PP_bind"/>
    <property type="match status" value="1"/>
</dbReference>
<dbReference type="Pfam" id="PF07516">
    <property type="entry name" value="SecA_SW"/>
    <property type="match status" value="1"/>
</dbReference>
<dbReference type="PRINTS" id="PR00906">
    <property type="entry name" value="SECA"/>
</dbReference>
<dbReference type="SMART" id="SM00957">
    <property type="entry name" value="SecA_DEAD"/>
    <property type="match status" value="1"/>
</dbReference>
<dbReference type="SMART" id="SM00958">
    <property type="entry name" value="SecA_PP_bind"/>
    <property type="match status" value="1"/>
</dbReference>
<dbReference type="SUPFAM" id="SSF81886">
    <property type="entry name" value="Helical scaffold and wing domains of SecA"/>
    <property type="match status" value="1"/>
</dbReference>
<dbReference type="SUPFAM" id="SSF52540">
    <property type="entry name" value="P-loop containing nucleoside triphosphate hydrolases"/>
    <property type="match status" value="2"/>
</dbReference>
<dbReference type="SUPFAM" id="SSF81767">
    <property type="entry name" value="Pre-protein crosslinking domain of SecA"/>
    <property type="match status" value="1"/>
</dbReference>
<dbReference type="PROSITE" id="PS01312">
    <property type="entry name" value="SECA"/>
    <property type="match status" value="1"/>
</dbReference>
<dbReference type="PROSITE" id="PS51196">
    <property type="entry name" value="SECA_MOTOR_DEAD"/>
    <property type="match status" value="1"/>
</dbReference>
<feature type="chain" id="PRO_1000145076" description="Protein translocase subunit SecA">
    <location>
        <begin position="1"/>
        <end position="912"/>
    </location>
</feature>
<feature type="region of interest" description="Disordered" evidence="2">
    <location>
        <begin position="855"/>
        <end position="912"/>
    </location>
</feature>
<feature type="compositionally biased region" description="Basic residues" evidence="2">
    <location>
        <begin position="902"/>
        <end position="912"/>
    </location>
</feature>
<feature type="binding site" evidence="1">
    <location>
        <position position="87"/>
    </location>
    <ligand>
        <name>ATP</name>
        <dbReference type="ChEBI" id="CHEBI:30616"/>
    </ligand>
</feature>
<feature type="binding site" evidence="1">
    <location>
        <begin position="105"/>
        <end position="109"/>
    </location>
    <ligand>
        <name>ATP</name>
        <dbReference type="ChEBI" id="CHEBI:30616"/>
    </ligand>
</feature>
<feature type="binding site" evidence="1">
    <location>
        <position position="508"/>
    </location>
    <ligand>
        <name>ATP</name>
        <dbReference type="ChEBI" id="CHEBI:30616"/>
    </ligand>
</feature>
<feature type="binding site" evidence="1">
    <location>
        <position position="896"/>
    </location>
    <ligand>
        <name>Zn(2+)</name>
        <dbReference type="ChEBI" id="CHEBI:29105"/>
    </ligand>
</feature>
<feature type="binding site" evidence="1">
    <location>
        <position position="898"/>
    </location>
    <ligand>
        <name>Zn(2+)</name>
        <dbReference type="ChEBI" id="CHEBI:29105"/>
    </ligand>
</feature>
<feature type="binding site" evidence="1">
    <location>
        <position position="907"/>
    </location>
    <ligand>
        <name>Zn(2+)</name>
        <dbReference type="ChEBI" id="CHEBI:29105"/>
    </ligand>
</feature>
<feature type="binding site" evidence="1">
    <location>
        <position position="908"/>
    </location>
    <ligand>
        <name>Zn(2+)</name>
        <dbReference type="ChEBI" id="CHEBI:29105"/>
    </ligand>
</feature>
<evidence type="ECO:0000255" key="1">
    <source>
        <dbReference type="HAMAP-Rule" id="MF_01382"/>
    </source>
</evidence>
<evidence type="ECO:0000256" key="2">
    <source>
        <dbReference type="SAM" id="MobiDB-lite"/>
    </source>
</evidence>
<reference key="1">
    <citation type="journal article" date="2008" name="J. Biotechnol.">
        <title>The genome of Xanthomonas campestris pv. campestris B100 and its use for the reconstruction of metabolic pathways involved in xanthan biosynthesis.</title>
        <authorList>
            <person name="Vorhoelter F.-J."/>
            <person name="Schneiker S."/>
            <person name="Goesmann A."/>
            <person name="Krause L."/>
            <person name="Bekel T."/>
            <person name="Kaiser O."/>
            <person name="Linke B."/>
            <person name="Patschkowski T."/>
            <person name="Rueckert C."/>
            <person name="Schmid J."/>
            <person name="Sidhu V.K."/>
            <person name="Sieber V."/>
            <person name="Tauch A."/>
            <person name="Watt S.A."/>
            <person name="Weisshaar B."/>
            <person name="Becker A."/>
            <person name="Niehaus K."/>
            <person name="Puehler A."/>
        </authorList>
    </citation>
    <scope>NUCLEOTIDE SEQUENCE [LARGE SCALE GENOMIC DNA]</scope>
    <source>
        <strain>B100</strain>
    </source>
</reference>
<name>SECA_XANCB</name>
<sequence>MINSLLTRVFGSRNERQLRQLNRLVTQINALEPTIEKLSDAELQAKTPEFKQRLAAGESLDKILPEAFAVCREASRRVLGMRHYDVQLIGGMVLHLGKIAEMRTGEGKTLVATLPVYLNALEGQGVHVVTVNDYLARRDAAQMGKLYNWLGLSVGVVYPGMPHSDKHAAYAADITYGTNNEFGFDYLRDNMALSRADRYQRKLHYAIVDEVDSILIDEARTPLIISGPADESPELYIRVNRIVPQLTKQESEEGEGDYWIDEKGKQVHLSEAGMGHAEELLLQAGILENADDGLYAAQNLSVVHHLNAALRAHAIYQRDVDYIVRDGEVVIVDEFTGRTLSGRRWSDGLHQAVEAKEGVPVQRENQTLASITFQNLFRMYKKLSGMTGTADTEAYEFQSIYGLEVVVIPTNRPTVRKDHPDQVFLNRKGKFNAVLADIEDCAKRGQPVLVGTTSIETSEMLSEHLRKAGVKHEVLNAKQHEREATIVANAGQPGAVTIATNMAGRGTDIVLGGSLEAEYHALGEDATEEARFKIKTDWQRRHDAVKAAGGLHIIGTERHESRRIDNQLRGRAGRQGDPGSSRFYLSLEDNLMRIFASDWVQKAMRMMGMKEDDVIEDRLVSRQIEKAQRKVEAHNFDIRKNLLDFDDVNNDQRKVIYAQRDDLLDAESVKDNVDGIRGDVIYDLVARFVPPNSVDEQWDLQGLEATLESELGMPLALRELAKTQEELDAEQIAAKVQTAVDAHFAEKEAAVGADTMRALEKHVMLTVLDQGWKEHLAKMDYLRQGIYLRGYAQKQPKQEYKKEAFELFSEMLENVKREVINLLARVRIRSEEEVAELEEQERRQAEARLLASQFQHQDAGGYGADEEVEQMQGGNAPVPVSQVTRDEPKVGRNDPCPCGSGKKYKHCHGQLS</sequence>
<proteinExistence type="inferred from homology"/>
<gene>
    <name evidence="1" type="primary">secA</name>
    <name type="ordered locus">xcc-b100_3622</name>
</gene>
<keyword id="KW-0067">ATP-binding</keyword>
<keyword id="KW-0997">Cell inner membrane</keyword>
<keyword id="KW-1003">Cell membrane</keyword>
<keyword id="KW-0963">Cytoplasm</keyword>
<keyword id="KW-0472">Membrane</keyword>
<keyword id="KW-0479">Metal-binding</keyword>
<keyword id="KW-0547">Nucleotide-binding</keyword>
<keyword id="KW-0653">Protein transport</keyword>
<keyword id="KW-1278">Translocase</keyword>
<keyword id="KW-0811">Translocation</keyword>
<keyword id="KW-0813">Transport</keyword>
<keyword id="KW-0862">Zinc</keyword>
<accession>B0RV96</accession>
<protein>
    <recommendedName>
        <fullName evidence="1">Protein translocase subunit SecA</fullName>
        <ecNumber evidence="1">7.4.2.8</ecNumber>
    </recommendedName>
</protein>
<organism>
    <name type="scientific">Xanthomonas campestris pv. campestris (strain B100)</name>
    <dbReference type="NCBI Taxonomy" id="509169"/>
    <lineage>
        <taxon>Bacteria</taxon>
        <taxon>Pseudomonadati</taxon>
        <taxon>Pseudomonadota</taxon>
        <taxon>Gammaproteobacteria</taxon>
        <taxon>Lysobacterales</taxon>
        <taxon>Lysobacteraceae</taxon>
        <taxon>Xanthomonas</taxon>
    </lineage>
</organism>
<comment type="function">
    <text evidence="1">Part of the Sec protein translocase complex. Interacts with the SecYEG preprotein conducting channel. Has a central role in coupling the hydrolysis of ATP to the transfer of proteins into and across the cell membrane, serving both as a receptor for the preprotein-SecB complex and as an ATP-driven molecular motor driving the stepwise translocation of polypeptide chains across the membrane.</text>
</comment>
<comment type="catalytic activity">
    <reaction evidence="1">
        <text>ATP + H2O + cellular proteinSide 1 = ADP + phosphate + cellular proteinSide 2.</text>
        <dbReference type="EC" id="7.4.2.8"/>
    </reaction>
</comment>
<comment type="cofactor">
    <cofactor evidence="1">
        <name>Zn(2+)</name>
        <dbReference type="ChEBI" id="CHEBI:29105"/>
    </cofactor>
    <text evidence="1">May bind 1 zinc ion per subunit.</text>
</comment>
<comment type="subunit">
    <text evidence="1">Monomer and homodimer. Part of the essential Sec protein translocation apparatus which comprises SecA, SecYEG and auxiliary proteins SecDF-YajC and YidC.</text>
</comment>
<comment type="subcellular location">
    <subcellularLocation>
        <location evidence="1">Cell inner membrane</location>
        <topology evidence="1">Peripheral membrane protein</topology>
        <orientation evidence="1">Cytoplasmic side</orientation>
    </subcellularLocation>
    <subcellularLocation>
        <location evidence="1">Cytoplasm</location>
    </subcellularLocation>
    <text evidence="1">Distribution is 50-50.</text>
</comment>
<comment type="similarity">
    <text evidence="1">Belongs to the SecA family.</text>
</comment>